<proteinExistence type="inferred from homology"/>
<reference key="1">
    <citation type="journal article" date="2003" name="Nature">
        <title>The genome sequence of the filamentous fungus Neurospora crassa.</title>
        <authorList>
            <person name="Galagan J.E."/>
            <person name="Calvo S.E."/>
            <person name="Borkovich K.A."/>
            <person name="Selker E.U."/>
            <person name="Read N.D."/>
            <person name="Jaffe D.B."/>
            <person name="FitzHugh W."/>
            <person name="Ma L.-J."/>
            <person name="Smirnov S."/>
            <person name="Purcell S."/>
            <person name="Rehman B."/>
            <person name="Elkins T."/>
            <person name="Engels R."/>
            <person name="Wang S."/>
            <person name="Nielsen C.B."/>
            <person name="Butler J."/>
            <person name="Endrizzi M."/>
            <person name="Qui D."/>
            <person name="Ianakiev P."/>
            <person name="Bell-Pedersen D."/>
            <person name="Nelson M.A."/>
            <person name="Werner-Washburne M."/>
            <person name="Selitrennikoff C.P."/>
            <person name="Kinsey J.A."/>
            <person name="Braun E.L."/>
            <person name="Zelter A."/>
            <person name="Schulte U."/>
            <person name="Kothe G.O."/>
            <person name="Jedd G."/>
            <person name="Mewes H.-W."/>
            <person name="Staben C."/>
            <person name="Marcotte E."/>
            <person name="Greenberg D."/>
            <person name="Roy A."/>
            <person name="Foley K."/>
            <person name="Naylor J."/>
            <person name="Stange-Thomann N."/>
            <person name="Barrett R."/>
            <person name="Gnerre S."/>
            <person name="Kamal M."/>
            <person name="Kamvysselis M."/>
            <person name="Mauceli E.W."/>
            <person name="Bielke C."/>
            <person name="Rudd S."/>
            <person name="Frishman D."/>
            <person name="Krystofova S."/>
            <person name="Rasmussen C."/>
            <person name="Metzenberg R.L."/>
            <person name="Perkins D.D."/>
            <person name="Kroken S."/>
            <person name="Cogoni C."/>
            <person name="Macino G."/>
            <person name="Catcheside D.E.A."/>
            <person name="Li W."/>
            <person name="Pratt R.J."/>
            <person name="Osmani S.A."/>
            <person name="DeSouza C.P.C."/>
            <person name="Glass N.L."/>
            <person name="Orbach M.J."/>
            <person name="Berglund J.A."/>
            <person name="Voelker R."/>
            <person name="Yarden O."/>
            <person name="Plamann M."/>
            <person name="Seiler S."/>
            <person name="Dunlap J.C."/>
            <person name="Radford A."/>
            <person name="Aramayo R."/>
            <person name="Natvig D.O."/>
            <person name="Alex L.A."/>
            <person name="Mannhaupt G."/>
            <person name="Ebbole D.J."/>
            <person name="Freitag M."/>
            <person name="Paulsen I."/>
            <person name="Sachs M.S."/>
            <person name="Lander E.S."/>
            <person name="Nusbaum C."/>
            <person name="Birren B.W."/>
        </authorList>
    </citation>
    <scope>NUCLEOTIDE SEQUENCE [LARGE SCALE GENOMIC DNA]</scope>
    <source>
        <strain>ATCC 24698 / 74-OR23-1A / CBS 708.71 / DSM 1257 / FGSC 987</strain>
    </source>
</reference>
<feature type="chain" id="PRO_0000411799" description="Probable Xaa-Pro aminopeptidase P">
    <location>
        <begin position="1"/>
        <end position="684"/>
    </location>
</feature>
<feature type="binding site" evidence="1">
    <location>
        <position position="481"/>
    </location>
    <ligand>
        <name>Mn(2+)</name>
        <dbReference type="ChEBI" id="CHEBI:29035"/>
        <label>2</label>
    </ligand>
</feature>
<feature type="binding site" evidence="1">
    <location>
        <position position="492"/>
    </location>
    <ligand>
        <name>Mn(2+)</name>
        <dbReference type="ChEBI" id="CHEBI:29035"/>
        <label>1</label>
    </ligand>
</feature>
<feature type="binding site" evidence="1">
    <location>
        <position position="492"/>
    </location>
    <ligand>
        <name>Mn(2+)</name>
        <dbReference type="ChEBI" id="CHEBI:29035"/>
        <label>2</label>
    </ligand>
</feature>
<feature type="binding site" evidence="1">
    <location>
        <position position="590"/>
    </location>
    <ligand>
        <name>Mn(2+)</name>
        <dbReference type="ChEBI" id="CHEBI:29035"/>
        <label>1</label>
    </ligand>
</feature>
<feature type="binding site" evidence="1">
    <location>
        <position position="604"/>
    </location>
    <ligand>
        <name>Mn(2+)</name>
        <dbReference type="ChEBI" id="CHEBI:29035"/>
        <label>1</label>
    </ligand>
</feature>
<feature type="binding site" evidence="1">
    <location>
        <position position="604"/>
    </location>
    <ligand>
        <name>Mn(2+)</name>
        <dbReference type="ChEBI" id="CHEBI:29035"/>
        <label>2</label>
    </ligand>
</feature>
<name>AMPP1_NEUCR</name>
<organism>
    <name type="scientific">Neurospora crassa (strain ATCC 24698 / 74-OR23-1A / CBS 708.71 / DSM 1257 / FGSC 987)</name>
    <dbReference type="NCBI Taxonomy" id="367110"/>
    <lineage>
        <taxon>Eukaryota</taxon>
        <taxon>Fungi</taxon>
        <taxon>Dikarya</taxon>
        <taxon>Ascomycota</taxon>
        <taxon>Pezizomycotina</taxon>
        <taxon>Sordariomycetes</taxon>
        <taxon>Sordariomycetidae</taxon>
        <taxon>Sordariales</taxon>
        <taxon>Sordariaceae</taxon>
        <taxon>Neurospora</taxon>
    </lineage>
</organism>
<comment type="function">
    <text evidence="1">Catalyzes the removal of a penultimate prolyl residue from the N-termini of peptides.</text>
</comment>
<comment type="catalytic activity">
    <reaction>
        <text>Release of any N-terminal amino acid, including proline, that is linked to proline, even from a dipeptide or tripeptide.</text>
        <dbReference type="EC" id="3.4.11.9"/>
    </reaction>
</comment>
<comment type="cofactor">
    <cofactor evidence="1">
        <name>Mn(2+)</name>
        <dbReference type="ChEBI" id="CHEBI:29035"/>
    </cofactor>
    <text evidence="1">Binds 2 manganese ions per subunit.</text>
</comment>
<comment type="similarity">
    <text evidence="2">Belongs to the peptidase M24B family.</text>
</comment>
<protein>
    <recommendedName>
        <fullName>Probable Xaa-Pro aminopeptidase P</fullName>
        <shortName>AMPP</shortName>
        <shortName>Aminopeptidase P</shortName>
        <ecNumber>3.4.11.9</ecNumber>
    </recommendedName>
    <alternativeName>
        <fullName>Aminoacylproline aminopeptidase</fullName>
    </alternativeName>
    <alternativeName>
        <fullName>Prolidase</fullName>
    </alternativeName>
</protein>
<sequence>MRSFWSFPSSCLTAVASSVPRPASRSQAARVLHNLPRALTAFPQPSRTTRAFSLTSRLFQHLRAASDEETMTVNTTDRLAALRSLMKERNVDIYVVPSEDSHASEYIAECDARRAFISGFTGSAGTAVVTLDKAALATDGRYFNQASKQLDENWHLLKTGLQDVPTWQEWTADESAGGKSVGIDPTLISPAVADKLDGDIKKHGGAGLKAINENLVDLVWGDSRPPRPSEPVFLLGAKYSGKGTAEKLTNLRKELEKKKAAAFVVSMLDEVAWLFNLRGNDITYNPVFFSYAIVTKDSATLYVDESKLNDEVKQYLAENGTGIKPYNDLFKDTEILANAAKSTSESDKPTKYLVSNKASWALKLALGGEKHVDEVRSPIGDAKAIKNETELEGMRRCHIRDGAALIKYFAWLEDQLINKKAKLDEVEAADQLEQFRSEQADFVGLSFDTISSTGPNGAIIHYKPERGACSVIDPDAIYLCDSGAQFCDGTTDVTRTLHFGQPTDAERKSYTLVLKGNIALDTAVFPKGTSGFALDALARQFLWKYGLDYRHGTGHGVGSFLNVHEGPIGIGTRKAYIDVPLAPGNVLSIEPGYYEDGNYGIRIENLAIVREVKTEHQFGDKPYLGFEHVTMVPYCRKLIDESLLTQEEKDWLNKSNEEIRKNMAGYFDGDQLTTEWLLRETSPF</sequence>
<gene>
    <name type="primary">ampp</name>
    <name type="ORF">NCU00112</name>
</gene>
<evidence type="ECO:0000250" key="1"/>
<evidence type="ECO:0000305" key="2"/>
<accession>Q7RYL6</accession>
<keyword id="KW-0031">Aminopeptidase</keyword>
<keyword id="KW-0378">Hydrolase</keyword>
<keyword id="KW-0464">Manganese</keyword>
<keyword id="KW-0479">Metal-binding</keyword>
<keyword id="KW-0482">Metalloprotease</keyword>
<keyword id="KW-0645">Protease</keyword>
<keyword id="KW-1185">Reference proteome</keyword>
<dbReference type="EC" id="3.4.11.9"/>
<dbReference type="EMBL" id="CM002238">
    <property type="protein sequence ID" value="EAA28000.2"/>
    <property type="molecule type" value="Genomic_DNA"/>
</dbReference>
<dbReference type="RefSeq" id="XP_957236.2">
    <property type="nucleotide sequence ID" value="XM_952143.2"/>
</dbReference>
<dbReference type="SMR" id="Q7RYL6"/>
<dbReference type="FunCoup" id="Q7RYL6">
    <property type="interactions" value="373"/>
</dbReference>
<dbReference type="STRING" id="367110.Q7RYL6"/>
<dbReference type="MEROPS" id="M24.A10"/>
<dbReference type="PaxDb" id="5141-EFNCRP00000000161"/>
<dbReference type="EnsemblFungi" id="EAA28000">
    <property type="protein sequence ID" value="EAA28000"/>
    <property type="gene ID" value="NCU00112"/>
</dbReference>
<dbReference type="GeneID" id="3873358"/>
<dbReference type="KEGG" id="ncr:NCU00112"/>
<dbReference type="VEuPathDB" id="FungiDB:NCU00112"/>
<dbReference type="HOGENOM" id="CLU_011781_2_2_1"/>
<dbReference type="InParanoid" id="Q7RYL6"/>
<dbReference type="OrthoDB" id="9995434at2759"/>
<dbReference type="Proteomes" id="UP000001805">
    <property type="component" value="Chromosome 3, Linkage Group III"/>
</dbReference>
<dbReference type="GO" id="GO:0005737">
    <property type="term" value="C:cytoplasm"/>
    <property type="evidence" value="ECO:0007669"/>
    <property type="project" value="UniProtKB-ARBA"/>
</dbReference>
<dbReference type="GO" id="GO:0046872">
    <property type="term" value="F:metal ion binding"/>
    <property type="evidence" value="ECO:0007669"/>
    <property type="project" value="UniProtKB-KW"/>
</dbReference>
<dbReference type="GO" id="GO:0070006">
    <property type="term" value="F:metalloaminopeptidase activity"/>
    <property type="evidence" value="ECO:0007669"/>
    <property type="project" value="InterPro"/>
</dbReference>
<dbReference type="GO" id="GO:0006508">
    <property type="term" value="P:proteolysis"/>
    <property type="evidence" value="ECO:0007669"/>
    <property type="project" value="UniProtKB-KW"/>
</dbReference>
<dbReference type="CDD" id="cd01085">
    <property type="entry name" value="APP"/>
    <property type="match status" value="1"/>
</dbReference>
<dbReference type="FunFam" id="3.40.350.10:FF:000010">
    <property type="entry name" value="Probable Xaa-Pro aminopeptidase P"/>
    <property type="match status" value="1"/>
</dbReference>
<dbReference type="FunFam" id="3.90.230.10:FF:000007">
    <property type="entry name" value="Xaa-Pro aminopeptidase P"/>
    <property type="match status" value="1"/>
</dbReference>
<dbReference type="FunFam" id="3.40.350.10:FF:000003">
    <property type="entry name" value="Xaa-pro aminopeptidase P"/>
    <property type="match status" value="1"/>
</dbReference>
<dbReference type="Gene3D" id="3.90.230.10">
    <property type="entry name" value="Creatinase/methionine aminopeptidase superfamily"/>
    <property type="match status" value="1"/>
</dbReference>
<dbReference type="Gene3D" id="3.40.350.10">
    <property type="entry name" value="Creatinase/prolidase N-terminal domain"/>
    <property type="match status" value="2"/>
</dbReference>
<dbReference type="InterPro" id="IPR029149">
    <property type="entry name" value="Creatin/AminoP/Spt16_N"/>
</dbReference>
<dbReference type="InterPro" id="IPR036005">
    <property type="entry name" value="Creatinase/aminopeptidase-like"/>
</dbReference>
<dbReference type="InterPro" id="IPR000587">
    <property type="entry name" value="Creatinase_N"/>
</dbReference>
<dbReference type="InterPro" id="IPR000994">
    <property type="entry name" value="Pept_M24"/>
</dbReference>
<dbReference type="InterPro" id="IPR033740">
    <property type="entry name" value="Pept_M24B"/>
</dbReference>
<dbReference type="InterPro" id="IPR032416">
    <property type="entry name" value="Peptidase_M24_C"/>
</dbReference>
<dbReference type="InterPro" id="IPR001131">
    <property type="entry name" value="Peptidase_M24B_aminopep-P_CS"/>
</dbReference>
<dbReference type="InterPro" id="IPR050422">
    <property type="entry name" value="X-Pro_aminopeptidase_P"/>
</dbReference>
<dbReference type="PANTHER" id="PTHR43763">
    <property type="entry name" value="XAA-PRO AMINOPEPTIDASE 1"/>
    <property type="match status" value="1"/>
</dbReference>
<dbReference type="PANTHER" id="PTHR43763:SF6">
    <property type="entry name" value="XAA-PRO AMINOPEPTIDASE 1"/>
    <property type="match status" value="1"/>
</dbReference>
<dbReference type="Pfam" id="PF01321">
    <property type="entry name" value="Creatinase_N"/>
    <property type="match status" value="1"/>
</dbReference>
<dbReference type="Pfam" id="PF16189">
    <property type="entry name" value="Creatinase_N_2"/>
    <property type="match status" value="1"/>
</dbReference>
<dbReference type="Pfam" id="PF00557">
    <property type="entry name" value="Peptidase_M24"/>
    <property type="match status" value="1"/>
</dbReference>
<dbReference type="Pfam" id="PF16188">
    <property type="entry name" value="Peptidase_M24_C"/>
    <property type="match status" value="1"/>
</dbReference>
<dbReference type="SUPFAM" id="SSF55920">
    <property type="entry name" value="Creatinase/aminopeptidase"/>
    <property type="match status" value="1"/>
</dbReference>
<dbReference type="SUPFAM" id="SSF53092">
    <property type="entry name" value="Creatinase/prolidase N-terminal domain"/>
    <property type="match status" value="1"/>
</dbReference>
<dbReference type="PROSITE" id="PS00491">
    <property type="entry name" value="PROLINE_PEPTIDASE"/>
    <property type="match status" value="1"/>
</dbReference>